<organism>
    <name type="scientific">Lacticaseibacillus casei</name>
    <name type="common">Lactobacillus casei</name>
    <dbReference type="NCBI Taxonomy" id="1582"/>
    <lineage>
        <taxon>Bacteria</taxon>
        <taxon>Bacillati</taxon>
        <taxon>Bacillota</taxon>
        <taxon>Bacilli</taxon>
        <taxon>Lactobacillales</taxon>
        <taxon>Lactobacillaceae</taxon>
        <taxon>Lacticaseibacillus</taxon>
    </lineage>
</organism>
<accession>P15925</accession>
<reference key="1">
    <citation type="journal article" date="1990" name="J. Biol. Chem.">
        <title>Cloning and expression of the gene encoding Lactobacillus casei folylpoly-gamma-glutamate synthetase in Escherichia coli and determination of its primary structure.</title>
        <authorList>
            <person name="Toy J."/>
            <person name="Bognar A.L."/>
        </authorList>
    </citation>
    <scope>NUCLEOTIDE SEQUENCE [GENOMIC DNA]</scope>
    <source>
        <strain>ATCC 7469</strain>
    </source>
</reference>
<reference key="2">
    <citation type="journal article" date="1983" name="J. Biol. Chem.">
        <title>Purification and properties of Lactobacillus casei folylpoly-gamma-glutamate synthetase.</title>
        <authorList>
            <person name="Bognar A.L."/>
            <person name="Shane B."/>
        </authorList>
    </citation>
    <scope>FUNCTION</scope>
    <scope>CATALYTIC ACTIVITY</scope>
    <scope>SUBSTRATE SPECIFICITY</scope>
    <scope>BIOPHYSICOCHEMICAL PROPERTIES</scope>
    <scope>COFACTOR</scope>
    <scope>ACTIVITY REGULATION</scope>
    <scope>SUBUNIT</scope>
    <scope>REACTION MECHANISM</scope>
</reference>
<reference key="3">
    <citation type="journal article" date="2008" name="Biochemistry">
        <title>Mutagenesis of folylpolyglutamate synthetase indicates that dihydropteroate and tetrahydrofolate bind to the same site.</title>
        <authorList>
            <person name="Sheng Y."/>
            <person name="Khanam N."/>
            <person name="Tsaksis Y."/>
            <person name="Shi X.M."/>
            <person name="Lu Q.S."/>
            <person name="Bognar A.L."/>
        </authorList>
    </citation>
    <scope>FUNCTION</scope>
    <scope>MUTAGENESIS OF ASP-151</scope>
    <scope>CHIMERA PROTEINS</scope>
    <scope>CATALYTIC ACTIVITY</scope>
    <scope>BIOPHYSICOCHEMICAL PROPERTIES</scope>
</reference>
<reference key="4">
    <citation type="journal article" date="1998" name="Proc. Natl. Acad. Sci. U.S.A.">
        <title>Structural homologies with ATP- and folate-binding enzymes in the crystal structure of folylpolyglutamate synthetase.</title>
        <authorList>
            <person name="Sun X."/>
            <person name="Bognar A.L."/>
            <person name="Baker E.N."/>
            <person name="Smith C.A."/>
        </authorList>
    </citation>
    <scope>X-RAY CRYSTALLOGRAPHY (2.4 ANGSTROMS)</scope>
</reference>
<reference key="5">
    <citation type="journal article" date="2001" name="J. Mol. Biol.">
        <title>Folate-binding triggers the activation of folylpolyglutamate synthetase.</title>
        <authorList>
            <person name="Sun X."/>
            <person name="Cross J.A."/>
            <person name="Bognar A.L."/>
            <person name="Baker E.N."/>
            <person name="Smith C.A."/>
        </authorList>
    </citation>
    <scope>X-RAY CRYSTALLOGRAPHY (1.85 ANGSTROMS) IN COMPLEXES WITH ATP ANALOG; MAGNESIUM AND 5,10-METHYLENETETRAHYDROFOLATE</scope>
    <scope>COFACTOR</scope>
    <scope>CARBOXYLATION AT LYS-185</scope>
    <scope>MUTAGENESIS OF HIS-316 AND SER-412</scope>
</reference>
<reference key="6">
    <citation type="journal article" date="2006" name="Acta Crystallogr. D">
        <title>Mutation of Gly51 to serine in the P-loop of Lactobacillus casei folylpolyglutamate synthetase abolishes activity by altering the conformation of two adjacent loops.</title>
        <authorList>
            <person name="Smith C.A."/>
            <person name="Cross J.A."/>
            <person name="Bognar A.L."/>
            <person name="Sun X."/>
        </authorList>
    </citation>
    <scope>X-RAY CRYSTALLOGRAPHY (1.85 ANGSTROMS) OF WILD-TYPE AND MUTANTS SER-51; 51-SER-THR-52 AND ALA-73</scope>
</reference>
<feature type="chain" id="PRO_0000168305" description="Folylpolyglutamate synthase">
    <location>
        <begin position="1"/>
        <end position="428"/>
    </location>
</feature>
<feature type="binding site" evidence="7 10 11">
    <location>
        <begin position="49"/>
        <end position="52"/>
    </location>
    <ligand>
        <name>ATP</name>
        <dbReference type="ChEBI" id="CHEBI:30616"/>
    </ligand>
</feature>
<feature type="binding site" evidence="1 10 11">
    <location>
        <position position="73"/>
    </location>
    <ligand>
        <name>Mg(2+)</name>
        <dbReference type="ChEBI" id="CHEBI:18420"/>
        <label>1</label>
    </ligand>
</feature>
<feature type="binding site" evidence="7 11">
    <location>
        <position position="75"/>
    </location>
    <ligand>
        <name>(6R)-5,10-methylenetetrahydrofolyl-(gamma-L-Glu)n</name>
        <dbReference type="ChEBI" id="CHEBI:136572"/>
    </ligand>
</feature>
<feature type="binding site" evidence="7 11">
    <location>
        <position position="82"/>
    </location>
    <ligand>
        <name>(6R)-5,10-methylenetetrahydrofolyl-(gamma-L-Glu)n</name>
        <dbReference type="ChEBI" id="CHEBI:136572"/>
    </ligand>
</feature>
<feature type="binding site" evidence="1 10 11">
    <location>
        <position position="143"/>
    </location>
    <ligand>
        <name>Mg(2+)</name>
        <dbReference type="ChEBI" id="CHEBI:18420"/>
        <label>1</label>
    </ligand>
</feature>
<feature type="binding site" evidence="1 10">
    <location>
        <position position="170"/>
    </location>
    <ligand>
        <name>Mg(2+)</name>
        <dbReference type="ChEBI" id="CHEBI:18420"/>
        <label>2</label>
    </ligand>
</feature>
<feature type="binding site" evidence="7 11">
    <location>
        <position position="264"/>
    </location>
    <ligand>
        <name>ATP</name>
        <dbReference type="ChEBI" id="CHEBI:30616"/>
    </ligand>
</feature>
<feature type="binding site" evidence="7 10 11">
    <location>
        <position position="300"/>
    </location>
    <ligand>
        <name>ATP</name>
        <dbReference type="ChEBI" id="CHEBI:30616"/>
    </ligand>
</feature>
<feature type="binding site" evidence="7 10 11">
    <location>
        <begin position="313"/>
        <end position="316"/>
    </location>
    <ligand>
        <name>ATP</name>
        <dbReference type="ChEBI" id="CHEBI:30616"/>
    </ligand>
</feature>
<feature type="binding site" evidence="7 11">
    <location>
        <position position="417"/>
    </location>
    <ligand>
        <name>(6R)-5,10-methylenetetrahydrofolyl-(gamma-L-Glu)n</name>
        <dbReference type="ChEBI" id="CHEBI:136572"/>
    </ligand>
</feature>
<feature type="modified residue" description="N6-carboxylysine" evidence="1 10 11">
    <location>
        <position position="185"/>
    </location>
</feature>
<feature type="mutagenesis site" description="220-fold decrease in catalytic efficiency with mTHF as substrate, but only 4-fold decrease in catalytic efficiency with 5,10-methylenetetrahydropteroyldiglutamate as substrate." evidence="2">
    <original>D</original>
    <variation>A</variation>
    <location>
        <position position="151"/>
    </location>
</feature>
<feature type="mutagenesis site" description="Loss of activity." evidence="4">
    <original>H</original>
    <variation>A</variation>
    <location>
        <position position="316"/>
    </location>
</feature>
<feature type="mutagenesis site" description="Loss of activity." evidence="4">
    <original>S</original>
    <variation>A</variation>
    <location>
        <position position="412"/>
    </location>
</feature>
<feature type="helix" evidence="13">
    <location>
        <begin position="3"/>
        <end position="10"/>
    </location>
</feature>
<feature type="helix" evidence="13">
    <location>
        <begin position="23"/>
        <end position="31"/>
    </location>
</feature>
<feature type="helix" evidence="13">
    <location>
        <begin position="35"/>
        <end position="37"/>
    </location>
</feature>
<feature type="strand" evidence="13">
    <location>
        <begin position="41"/>
        <end position="45"/>
    </location>
</feature>
<feature type="strand" evidence="14">
    <location>
        <begin position="47"/>
        <end position="49"/>
    </location>
</feature>
<feature type="helix" evidence="13">
    <location>
        <begin position="50"/>
        <end position="63"/>
    </location>
</feature>
<feature type="strand" evidence="13">
    <location>
        <begin position="68"/>
        <end position="71"/>
    </location>
</feature>
<feature type="strand" evidence="12">
    <location>
        <begin position="76"/>
        <end position="78"/>
    </location>
</feature>
<feature type="helix" evidence="13">
    <location>
        <begin position="79"/>
        <end position="82"/>
    </location>
</feature>
<feature type="strand" evidence="13">
    <location>
        <begin position="83"/>
        <end position="85"/>
    </location>
</feature>
<feature type="helix" evidence="13">
    <location>
        <begin position="92"/>
        <end position="112"/>
    </location>
</feature>
<feature type="helix" evidence="13">
    <location>
        <begin position="120"/>
        <end position="134"/>
    </location>
</feature>
<feature type="strand" evidence="13">
    <location>
        <begin position="138"/>
        <end position="143"/>
    </location>
</feature>
<feature type="strand" evidence="13">
    <location>
        <begin position="145"/>
        <end position="148"/>
    </location>
</feature>
<feature type="strand" evidence="13">
    <location>
        <begin position="159"/>
        <end position="163"/>
    </location>
</feature>
<feature type="helix" evidence="14">
    <location>
        <begin position="168"/>
        <end position="170"/>
    </location>
</feature>
<feature type="helix" evidence="13">
    <location>
        <begin position="171"/>
        <end position="174"/>
    </location>
</feature>
<feature type="helix" evidence="13">
    <location>
        <begin position="178"/>
        <end position="185"/>
    </location>
</feature>
<feature type="helix" evidence="13">
    <location>
        <begin position="186"/>
        <end position="188"/>
    </location>
</feature>
<feature type="strand" evidence="13">
    <location>
        <begin position="195"/>
        <end position="197"/>
    </location>
</feature>
<feature type="helix" evidence="13">
    <location>
        <begin position="202"/>
        <end position="215"/>
    </location>
</feature>
<feature type="strand" evidence="13">
    <location>
        <begin position="219"/>
        <end position="221"/>
    </location>
</feature>
<feature type="turn" evidence="13">
    <location>
        <begin position="222"/>
        <end position="224"/>
    </location>
</feature>
<feature type="strand" evidence="13">
    <location>
        <begin position="225"/>
        <end position="233"/>
    </location>
</feature>
<feature type="strand" evidence="13">
    <location>
        <begin position="235"/>
        <end position="244"/>
    </location>
</feature>
<feature type="strand" evidence="13">
    <location>
        <begin position="247"/>
        <end position="255"/>
    </location>
</feature>
<feature type="helix" evidence="13">
    <location>
        <begin position="260"/>
        <end position="278"/>
    </location>
</feature>
<feature type="helix" evidence="13">
    <location>
        <begin position="285"/>
        <end position="293"/>
    </location>
</feature>
<feature type="strand" evidence="13">
    <location>
        <begin position="300"/>
        <end position="305"/>
    </location>
</feature>
<feature type="turn" evidence="13">
    <location>
        <begin position="306"/>
        <end position="309"/>
    </location>
</feature>
<feature type="strand" evidence="13">
    <location>
        <begin position="310"/>
        <end position="313"/>
    </location>
</feature>
<feature type="helix" evidence="13">
    <location>
        <begin position="318"/>
        <end position="331"/>
    </location>
</feature>
<feature type="strand" evidence="13">
    <location>
        <begin position="337"/>
        <end position="341"/>
    </location>
</feature>
<feature type="strand" evidence="13">
    <location>
        <begin position="343"/>
        <end position="345"/>
    </location>
</feature>
<feature type="helix" evidence="13">
    <location>
        <begin position="348"/>
        <end position="358"/>
    </location>
</feature>
<feature type="strand" evidence="13">
    <location>
        <begin position="360"/>
        <end position="364"/>
    </location>
</feature>
<feature type="helix" evidence="13">
    <location>
        <begin position="391"/>
        <end position="401"/>
    </location>
</feature>
<feature type="strand" evidence="13">
    <location>
        <begin position="407"/>
        <end position="412"/>
    </location>
</feature>
<feature type="helix" evidence="13">
    <location>
        <begin position="413"/>
        <end position="423"/>
    </location>
</feature>
<evidence type="ECO:0000269" key="1">
    <source>
    </source>
</evidence>
<evidence type="ECO:0000269" key="2">
    <source>
    </source>
</evidence>
<evidence type="ECO:0000269" key="3">
    <source>
    </source>
</evidence>
<evidence type="ECO:0000303" key="4">
    <source>
    </source>
</evidence>
<evidence type="ECO:0000303" key="5">
    <source>
    </source>
</evidence>
<evidence type="ECO:0000305" key="6"/>
<evidence type="ECO:0000305" key="7">
    <source>
    </source>
</evidence>
<evidence type="ECO:0000305" key="8">
    <source>
    </source>
</evidence>
<evidence type="ECO:0000312" key="9">
    <source>
        <dbReference type="EMBL" id="AAA88210.1"/>
    </source>
</evidence>
<evidence type="ECO:0007744" key="10">
    <source>
        <dbReference type="PDB" id="1JBV"/>
    </source>
</evidence>
<evidence type="ECO:0007744" key="11">
    <source>
        <dbReference type="PDB" id="1JBW"/>
    </source>
</evidence>
<evidence type="ECO:0007829" key="12">
    <source>
        <dbReference type="PDB" id="1FGS"/>
    </source>
</evidence>
<evidence type="ECO:0007829" key="13">
    <source>
        <dbReference type="PDB" id="1JBW"/>
    </source>
</evidence>
<evidence type="ECO:0007829" key="14">
    <source>
        <dbReference type="PDB" id="2GC5"/>
    </source>
</evidence>
<name>FPGS_LACCA</name>
<sequence>MNYTETVAYIHSFPRLAKTGDHRRILTLLHALGNPQQQGRYIHVTGTNGKGSAANAIAHVLEASGLTVGLYTSPFIMRFNERIMIDHEPIPDAALVNAVAFVRAALERLQQQQADFNVTEFEFITALGYWYFRQRQVDVAVIEVGIGGDTDSTNVITPVVSVLTEVALDHQKLLGHTITAIAKHKAGIIKRGIPVVTGNLVPDAAAVVAAKVATTGSQWLRFDRDFSVPKAKLHGWGQRFTYEDQDGRISDLEVPLVGDYQQRNMAIAIQTAKVYAKQTEWPLTPQNIRQGLAASHWPARLEKISDTPLIVIDGAHNPDGINGLITALKQLFSQPITVIAGILADKDYAAMADRLTAAFSTVYLVPVPGTPRALPEAGYEALHEGRLKDSWQEALAASLNDVPDQPIVITGSLYLASAVRQTLLGGKS</sequence>
<dbReference type="EC" id="6.3.2.17" evidence="3"/>
<dbReference type="EMBL" id="J05221">
    <property type="protein sequence ID" value="AAA88210.1"/>
    <property type="molecule type" value="Genomic_DNA"/>
</dbReference>
<dbReference type="PIR" id="A35534">
    <property type="entry name" value="A35534"/>
</dbReference>
<dbReference type="PDB" id="1FGS">
    <property type="method" value="X-ray"/>
    <property type="resolution" value="2.40 A"/>
    <property type="chains" value="A=1-428"/>
</dbReference>
<dbReference type="PDB" id="1JBV">
    <property type="method" value="X-ray"/>
    <property type="resolution" value="1.95 A"/>
    <property type="chains" value="A=1-428"/>
</dbReference>
<dbReference type="PDB" id="1JBW">
    <property type="method" value="X-ray"/>
    <property type="resolution" value="1.85 A"/>
    <property type="chains" value="A=1-428"/>
</dbReference>
<dbReference type="PDB" id="2GC5">
    <property type="method" value="X-ray"/>
    <property type="resolution" value="1.85 A"/>
    <property type="chains" value="A=1-428"/>
</dbReference>
<dbReference type="PDB" id="2GC6">
    <property type="method" value="X-ray"/>
    <property type="resolution" value="1.90 A"/>
    <property type="chains" value="A=1-428"/>
</dbReference>
<dbReference type="PDB" id="2GCA">
    <property type="method" value="X-ray"/>
    <property type="resolution" value="2.40 A"/>
    <property type="chains" value="A=1-428"/>
</dbReference>
<dbReference type="PDB" id="2GCB">
    <property type="method" value="X-ray"/>
    <property type="resolution" value="2.30 A"/>
    <property type="chains" value="A=1-428"/>
</dbReference>
<dbReference type="PDBsum" id="1FGS"/>
<dbReference type="PDBsum" id="1JBV"/>
<dbReference type="PDBsum" id="1JBW"/>
<dbReference type="PDBsum" id="2GC5"/>
<dbReference type="PDBsum" id="2GC6"/>
<dbReference type="PDBsum" id="2GCA"/>
<dbReference type="PDBsum" id="2GCB"/>
<dbReference type="SMR" id="P15925"/>
<dbReference type="STRING" id="1582.AAW28_03915"/>
<dbReference type="DrugBank" id="DB02301">
    <property type="generic name" value="5,10-Methylene-6-Hydrofolic Acid"/>
</dbReference>
<dbReference type="DrugBank" id="DB03755">
    <property type="generic name" value="Adenosine-5'-[Beta, Gamma-Methylene]Tetraphosphate"/>
</dbReference>
<dbReference type="DrugBank" id="DB03909">
    <property type="generic name" value="Adenosine-5'-[Beta, Gamma-Methylene]Triphosphate"/>
</dbReference>
<dbReference type="DrugBank" id="DB03801">
    <property type="generic name" value="Lysine Nz-Carboxylic Acid"/>
</dbReference>
<dbReference type="BRENDA" id="6.3.2.17">
    <property type="organism ID" value="2854"/>
</dbReference>
<dbReference type="SABIO-RK" id="P15925"/>
<dbReference type="EvolutionaryTrace" id="P15925"/>
<dbReference type="GO" id="GO:0005737">
    <property type="term" value="C:cytoplasm"/>
    <property type="evidence" value="ECO:0007669"/>
    <property type="project" value="TreeGrafter"/>
</dbReference>
<dbReference type="GO" id="GO:0005524">
    <property type="term" value="F:ATP binding"/>
    <property type="evidence" value="ECO:0007669"/>
    <property type="project" value="UniProtKB-KW"/>
</dbReference>
<dbReference type="GO" id="GO:0008841">
    <property type="term" value="F:dihydrofolate synthase activity"/>
    <property type="evidence" value="ECO:0007669"/>
    <property type="project" value="TreeGrafter"/>
</dbReference>
<dbReference type="GO" id="GO:0046872">
    <property type="term" value="F:metal ion binding"/>
    <property type="evidence" value="ECO:0007669"/>
    <property type="project" value="UniProtKB-KW"/>
</dbReference>
<dbReference type="GO" id="GO:0004326">
    <property type="term" value="F:tetrahydrofolylpolyglutamate synthase activity"/>
    <property type="evidence" value="ECO:0007669"/>
    <property type="project" value="UniProtKB-EC"/>
</dbReference>
<dbReference type="GO" id="GO:0006730">
    <property type="term" value="P:one-carbon metabolic process"/>
    <property type="evidence" value="ECO:0007669"/>
    <property type="project" value="UniProtKB-KW"/>
</dbReference>
<dbReference type="FunFam" id="3.40.1190.10:FF:000011">
    <property type="entry name" value="Folylpolyglutamate synthase/dihydrofolate synthase"/>
    <property type="match status" value="1"/>
</dbReference>
<dbReference type="Gene3D" id="3.90.190.20">
    <property type="entry name" value="Mur ligase, C-terminal domain"/>
    <property type="match status" value="1"/>
</dbReference>
<dbReference type="Gene3D" id="3.40.1190.10">
    <property type="entry name" value="Mur-like, catalytic domain"/>
    <property type="match status" value="1"/>
</dbReference>
<dbReference type="InterPro" id="IPR001645">
    <property type="entry name" value="Folylpolyglutamate_synth"/>
</dbReference>
<dbReference type="InterPro" id="IPR018109">
    <property type="entry name" value="Folylpolyglutamate_synth_CS"/>
</dbReference>
<dbReference type="InterPro" id="IPR036565">
    <property type="entry name" value="Mur-like_cat_sf"/>
</dbReference>
<dbReference type="InterPro" id="IPR004101">
    <property type="entry name" value="Mur_ligase_C"/>
</dbReference>
<dbReference type="InterPro" id="IPR036615">
    <property type="entry name" value="Mur_ligase_C_dom_sf"/>
</dbReference>
<dbReference type="InterPro" id="IPR013221">
    <property type="entry name" value="Mur_ligase_cen"/>
</dbReference>
<dbReference type="NCBIfam" id="TIGR01499">
    <property type="entry name" value="folC"/>
    <property type="match status" value="1"/>
</dbReference>
<dbReference type="PANTHER" id="PTHR11136:SF0">
    <property type="entry name" value="DIHYDROFOLATE SYNTHETASE-RELATED"/>
    <property type="match status" value="1"/>
</dbReference>
<dbReference type="PANTHER" id="PTHR11136">
    <property type="entry name" value="FOLYLPOLYGLUTAMATE SYNTHASE-RELATED"/>
    <property type="match status" value="1"/>
</dbReference>
<dbReference type="Pfam" id="PF02875">
    <property type="entry name" value="Mur_ligase_C"/>
    <property type="match status" value="1"/>
</dbReference>
<dbReference type="Pfam" id="PF08245">
    <property type="entry name" value="Mur_ligase_M"/>
    <property type="match status" value="1"/>
</dbReference>
<dbReference type="PIRSF" id="PIRSF001563">
    <property type="entry name" value="Folylpolyglu_synth"/>
    <property type="match status" value="1"/>
</dbReference>
<dbReference type="SUPFAM" id="SSF53623">
    <property type="entry name" value="MurD-like peptide ligases, catalytic domain"/>
    <property type="match status" value="1"/>
</dbReference>
<dbReference type="SUPFAM" id="SSF53244">
    <property type="entry name" value="MurD-like peptide ligases, peptide-binding domain"/>
    <property type="match status" value="1"/>
</dbReference>
<dbReference type="PROSITE" id="PS01011">
    <property type="entry name" value="FOLYLPOLYGLU_SYNT_1"/>
    <property type="match status" value="1"/>
</dbReference>
<dbReference type="PROSITE" id="PS01012">
    <property type="entry name" value="FOLYLPOLYGLU_SYNT_2"/>
    <property type="match status" value="1"/>
</dbReference>
<comment type="function">
    <text evidence="2 3">Involved in the conversion of folates to polyglutamate derivatives, and likely functions in the retention of cellular folate pools. Catalyzes successive MgATP-dependent additions of glutamate to a pteroylmonoglutamate substrate, with a high preference for 5,10-methylenetetrahydrofolate (mTHF). Thus, metabolizes mTHF to the tetraglutamate derivative, but longer glutamate chain length products are not observed. Tetrahydrofolate (H4PteGlu) and 10-formyl-H4PteGlu are poorer folate substrates. In contrast to E.coli FolC, this enzyme does not display dihydrofolate synthase activity.</text>
</comment>
<comment type="catalytic activity">
    <reaction evidence="3">
        <text>(6S)-5,6,7,8-tetrahydrofolyl-(gamma-L-Glu)(n) + L-glutamate + ATP = (6S)-5,6,7,8-tetrahydrofolyl-(gamma-L-Glu)(n+1) + ADP + phosphate + H(+)</text>
        <dbReference type="Rhea" id="RHEA:10580"/>
        <dbReference type="Rhea" id="RHEA-COMP:14738"/>
        <dbReference type="Rhea" id="RHEA-COMP:14740"/>
        <dbReference type="ChEBI" id="CHEBI:15378"/>
        <dbReference type="ChEBI" id="CHEBI:29985"/>
        <dbReference type="ChEBI" id="CHEBI:30616"/>
        <dbReference type="ChEBI" id="CHEBI:43474"/>
        <dbReference type="ChEBI" id="CHEBI:141005"/>
        <dbReference type="ChEBI" id="CHEBI:456216"/>
        <dbReference type="EC" id="6.3.2.17"/>
    </reaction>
</comment>
<comment type="catalytic activity">
    <reaction evidence="2 3">
        <text>(6R)-5,10-methylenetetrahydrofolyl-(gamma-L-Glu)(n) + L-glutamate + ATP = (6R)-5,10-methylenetetrahydrofolyl-(gamma-L-Glu)(n+1) + ADP + phosphate + H(+)</text>
        <dbReference type="Rhea" id="RHEA:51912"/>
        <dbReference type="Rhea" id="RHEA-COMP:13257"/>
        <dbReference type="Rhea" id="RHEA-COMP:13258"/>
        <dbReference type="ChEBI" id="CHEBI:15378"/>
        <dbReference type="ChEBI" id="CHEBI:29985"/>
        <dbReference type="ChEBI" id="CHEBI:30616"/>
        <dbReference type="ChEBI" id="CHEBI:43474"/>
        <dbReference type="ChEBI" id="CHEBI:136572"/>
        <dbReference type="ChEBI" id="CHEBI:456216"/>
        <dbReference type="EC" id="6.3.2.17"/>
    </reaction>
</comment>
<comment type="catalytic activity">
    <reaction evidence="3">
        <text>10-formyltetrahydrofolyl-(gamma-L-Glu)(n) + L-glutamate + ATP = 10-formyltetrahydrofolyl-(gamma-L-Glu)(n+1) + ADP + phosphate + H(+)</text>
        <dbReference type="Rhea" id="RHEA:51904"/>
        <dbReference type="Rhea" id="RHEA-COMP:13088"/>
        <dbReference type="Rhea" id="RHEA-COMP:14300"/>
        <dbReference type="ChEBI" id="CHEBI:15378"/>
        <dbReference type="ChEBI" id="CHEBI:29985"/>
        <dbReference type="ChEBI" id="CHEBI:30616"/>
        <dbReference type="ChEBI" id="CHEBI:43474"/>
        <dbReference type="ChEBI" id="CHEBI:134413"/>
        <dbReference type="ChEBI" id="CHEBI:456216"/>
        <dbReference type="EC" id="6.3.2.17"/>
    </reaction>
</comment>
<comment type="cofactor">
    <cofactor evidence="3">
        <name>Mg(2+)</name>
        <dbReference type="ChEBI" id="CHEBI:18420"/>
    </cofactor>
    <text evidence="1">Binds 2 Mg(2+) ions per subunit.</text>
</comment>
<comment type="activity regulation">
    <text evidence="3">Competitively inhibited by adenosine 5'-(3-thio)triphosphate and beta,gamma-methylene-ATP.</text>
</comment>
<comment type="biophysicochemical properties">
    <kinetics>
        <KM evidence="3">2.3 uM for (6R)-5,10-methylenetetrahydropteroyldiglutamate</KM>
        <KM evidence="3">5.6 mM for ATP</KM>
        <KM evidence="3">423 uM for glutamate</KM>
        <KM evidence="2">32 uM for (6RS)-5,10-methylenetetrahydrofolate</KM>
        <KM evidence="2">3.4 mM for ATP</KM>
        <KM evidence="2">470 uM for glutamate</KM>
        <KM evidence="2">27 uM for (6RS)-5,10-methylenetetrahydropteroyldiglutamate</KM>
        <Vmax evidence="3">67.5 umol/h/mg enzyme with (6R)-5,10-methylenetetrahydropteroyldiglutamate as substrate</Vmax>
        <Vmax evidence="2">19.0 umol/h/mg enzyme with (6RS)-5,10-methylenetetrahydrofolate as substrate</Vmax>
        <Vmax evidence="2">14.0 umol/h/mg enzyme with (6RS)-5,10-methylenetetrahydropteroyldiglutamate as substrate</Vmax>
    </kinetics>
    <phDependence>
        <text evidence="3">Optimum pH is about 10.</text>
    </phDependence>
</comment>
<comment type="subunit">
    <text evidence="3">Monomer.</text>
</comment>
<comment type="miscellaneous">
    <text evidence="8">In contrast to many bacteria such as E.coli and Corynebacterium spp., L.casei cannot synthesize folate de novo, and requires exogenous folates for growth. L.casei metabolizes folate to polyglutamates of chain length up to 11, with octa- and nonaglutamates predominating.</text>
</comment>
<comment type="miscellaneous">
    <text evidence="3">Kinetic studies are consistent with an ordered Ter-Ter mechanism with MgATP binding first to the enzyme, folate second, and glutamate last. The order of product dissociation from the enzyme is ADP, folate product, and Pi.</text>
</comment>
<comment type="similarity">
    <text evidence="6">Belongs to the folylpolyglutamate synthase family.</text>
</comment>
<gene>
    <name evidence="9" type="primary">fpgS</name>
</gene>
<proteinExistence type="evidence at protein level"/>
<keyword id="KW-0002">3D-structure</keyword>
<keyword id="KW-0067">ATP-binding</keyword>
<keyword id="KW-0436">Ligase</keyword>
<keyword id="KW-0460">Magnesium</keyword>
<keyword id="KW-0479">Metal-binding</keyword>
<keyword id="KW-0547">Nucleotide-binding</keyword>
<keyword id="KW-0554">One-carbon metabolism</keyword>
<protein>
    <recommendedName>
        <fullName evidence="6">Folylpolyglutamate synthase</fullName>
        <shortName evidence="4">FPGS</shortName>
        <ecNumber evidence="3">6.3.2.17</ecNumber>
    </recommendedName>
    <alternativeName>
        <fullName evidence="5">Folylpoly-gamma-glutamate synthetase</fullName>
    </alternativeName>
    <alternativeName>
        <fullName>Tetrahydrofolylpolyglutamate synthase</fullName>
    </alternativeName>
</protein>